<keyword id="KW-0002">3D-structure</keyword>
<keyword id="KW-0903">Direct protein sequencing</keyword>
<keyword id="KW-1015">Disulfide bond</keyword>
<keyword id="KW-0256">Endoplasmic reticulum</keyword>
<keyword id="KW-0472">Membrane</keyword>
<keyword id="KW-1185">Reference proteome</keyword>
<keyword id="KW-0732">Signal</keyword>
<keyword id="KW-0812">Transmembrane</keyword>
<keyword id="KW-1133">Transmembrane helix</keyword>
<name>OST3_YEAST</name>
<organism>
    <name type="scientific">Saccharomyces cerevisiae (strain ATCC 204508 / S288c)</name>
    <name type="common">Baker's yeast</name>
    <dbReference type="NCBI Taxonomy" id="559292"/>
    <lineage>
        <taxon>Eukaryota</taxon>
        <taxon>Fungi</taxon>
        <taxon>Dikarya</taxon>
        <taxon>Ascomycota</taxon>
        <taxon>Saccharomycotina</taxon>
        <taxon>Saccharomycetes</taxon>
        <taxon>Saccharomycetales</taxon>
        <taxon>Saccharomycetaceae</taxon>
        <taxon>Saccharomyces</taxon>
    </lineage>
</organism>
<sequence length="350" mass="39483">MNWLFLVSLVFFCGVSTHPALAMSSNRLLKLANKSPKKIIPLKDSSFENILAPPHENAYIVALFTATAPEIGCSLCLELESEYDTIVASWFDDHPDAKSSNSDTSIFFTKVNLEDPSKTIPKAFQFFQLNNVPRLFIFKPNSPSILDHSVISISTDTGSERMKQIIQAIKQFSQVNDFSLHLPMDWTPIITSTIITFITVLLFKKQSKLMFSIISSRIIWATLSTFFIICMISAYMFNQIRNTQLAGVGPKGEVMYFLPNEFQHQFAIETQVMVLIYGTLAALVVVLVKGIQFLRSHLYPETKKAYFIDAILASFCALFIYVFFAALTTVFTIKSPAYPFPLLRLSAPFK</sequence>
<accession>P48439</accession>
<accession>D6W2E7</accession>
<feature type="signal peptide" evidence="10">
    <location>
        <begin position="1"/>
        <end position="22"/>
    </location>
</feature>
<feature type="chain" id="PRO_0000020275" description="Dolichyl-diphosphooligosaccharide--protein glycosyltransferase subunit 3">
    <location>
        <begin position="23"/>
        <end position="350"/>
    </location>
</feature>
<feature type="topological domain" description="Lumenal" evidence="12">
    <location>
        <begin position="23"/>
        <end position="182"/>
    </location>
</feature>
<feature type="transmembrane region" description="Helical" evidence="1">
    <location>
        <begin position="183"/>
        <end position="203"/>
    </location>
</feature>
<feature type="topological domain" description="Cytoplasmic" evidence="12">
    <location>
        <begin position="204"/>
        <end position="217"/>
    </location>
</feature>
<feature type="transmembrane region" description="Helical" evidence="9">
    <location>
        <begin position="218"/>
        <end position="238"/>
    </location>
</feature>
<feature type="topological domain" description="Lumenal" evidence="12">
    <location>
        <begin position="239"/>
        <end position="273"/>
    </location>
</feature>
<feature type="transmembrane region" description="Helical" evidence="9">
    <location>
        <begin position="274"/>
        <end position="294"/>
    </location>
</feature>
<feature type="topological domain" description="Cytoplasmic" evidence="12">
    <location>
        <begin position="295"/>
        <end position="306"/>
    </location>
</feature>
<feature type="transmembrane region" description="Helical" evidence="9">
    <location>
        <begin position="307"/>
        <end position="327"/>
    </location>
</feature>
<feature type="topological domain" description="Lumenal" evidence="12">
    <location>
        <begin position="328"/>
        <end position="350"/>
    </location>
</feature>
<feature type="domain" description="Thioredoxin" evidence="2">
    <location>
        <begin position="29"/>
        <end position="171"/>
    </location>
</feature>
<feature type="disulfide bond" description="Redox-active" evidence="2">
    <location>
        <begin position="73"/>
        <end position="76"/>
    </location>
</feature>
<feature type="helix" evidence="14">
    <location>
        <begin position="210"/>
        <end position="215"/>
    </location>
</feature>
<feature type="helix" evidence="16">
    <location>
        <begin position="217"/>
        <end position="232"/>
    </location>
</feature>
<feature type="turn" evidence="15">
    <location>
        <begin position="233"/>
        <end position="236"/>
    </location>
</feature>
<feature type="helix" evidence="16">
    <location>
        <begin position="237"/>
        <end position="240"/>
    </location>
</feature>
<feature type="strand" evidence="16">
    <location>
        <begin position="250"/>
        <end position="254"/>
    </location>
</feature>
<feature type="helix" evidence="16">
    <location>
        <begin position="268"/>
        <end position="289"/>
    </location>
</feature>
<feature type="helix" evidence="16">
    <location>
        <begin position="291"/>
        <end position="298"/>
    </location>
</feature>
<feature type="helix" evidence="16">
    <location>
        <begin position="306"/>
        <end position="334"/>
    </location>
</feature>
<dbReference type="EMBL" id="U25052">
    <property type="protein sequence ID" value="AAC49042.1"/>
    <property type="molecule type" value="Genomic_DNA"/>
</dbReference>
<dbReference type="EMBL" id="X79596">
    <property type="protein sequence ID" value="CAA56108.1"/>
    <property type="molecule type" value="Genomic_DNA"/>
</dbReference>
<dbReference type="EMBL" id="X94335">
    <property type="protein sequence ID" value="CAA64007.1"/>
    <property type="molecule type" value="Genomic_DNA"/>
</dbReference>
<dbReference type="EMBL" id="Z74993">
    <property type="protein sequence ID" value="CAA99280.1"/>
    <property type="molecule type" value="Genomic_DNA"/>
</dbReference>
<dbReference type="EMBL" id="AY558041">
    <property type="protein sequence ID" value="AAS56367.1"/>
    <property type="molecule type" value="Genomic_DNA"/>
</dbReference>
<dbReference type="EMBL" id="BK006948">
    <property type="protein sequence ID" value="DAA10863.1"/>
    <property type="molecule type" value="Genomic_DNA"/>
</dbReference>
<dbReference type="PIR" id="S61646">
    <property type="entry name" value="S61646"/>
</dbReference>
<dbReference type="RefSeq" id="NP_014728.1">
    <property type="nucleotide sequence ID" value="NM_001183504.1"/>
</dbReference>
<dbReference type="PDB" id="6C26">
    <property type="method" value="EM"/>
    <property type="resolution" value="3.50 A"/>
    <property type="chains" value="3=1-350"/>
</dbReference>
<dbReference type="PDB" id="6EZN">
    <property type="method" value="EM"/>
    <property type="resolution" value="3.30 A"/>
    <property type="chains" value="C=1-350"/>
</dbReference>
<dbReference type="PDB" id="8AGB">
    <property type="method" value="EM"/>
    <property type="resolution" value="3.00 A"/>
    <property type="chains" value="H=1-350"/>
</dbReference>
<dbReference type="PDB" id="8AGC">
    <property type="method" value="EM"/>
    <property type="resolution" value="3.10 A"/>
    <property type="chains" value="H=1-350"/>
</dbReference>
<dbReference type="PDB" id="8AGE">
    <property type="method" value="EM"/>
    <property type="resolution" value="2.80 A"/>
    <property type="chains" value="H=1-350"/>
</dbReference>
<dbReference type="PDBsum" id="6C26"/>
<dbReference type="PDBsum" id="6EZN"/>
<dbReference type="PDBsum" id="8AGB"/>
<dbReference type="PDBsum" id="8AGC"/>
<dbReference type="PDBsum" id="8AGE"/>
<dbReference type="EMDB" id="EMD-15419"/>
<dbReference type="EMDB" id="EMD-4161"/>
<dbReference type="EMDB" id="EMD-7336"/>
<dbReference type="SMR" id="P48439"/>
<dbReference type="BioGRID" id="34483">
    <property type="interactions" value="434"/>
</dbReference>
<dbReference type="ComplexPortal" id="CPX-1639">
    <property type="entry name" value="Oligosaccharyltransferase complex, OST3 variant"/>
</dbReference>
<dbReference type="DIP" id="DIP-2456N"/>
<dbReference type="FunCoup" id="P48439">
    <property type="interactions" value="361"/>
</dbReference>
<dbReference type="IntAct" id="P48439">
    <property type="interactions" value="6"/>
</dbReference>
<dbReference type="STRING" id="4932.YOR085W"/>
<dbReference type="TCDB" id="1.A.76.1.8">
    <property type="family name" value="the magnesium transporter1 (magt1) family"/>
</dbReference>
<dbReference type="TCDB" id="9.B.142.3.14">
    <property type="family name" value="the integral membrane glycosyltransferase family 39 (gt39) family"/>
</dbReference>
<dbReference type="PaxDb" id="4932-YOR085W"/>
<dbReference type="PeptideAtlas" id="P48439"/>
<dbReference type="TopDownProteomics" id="P48439"/>
<dbReference type="EnsemblFungi" id="YOR085W_mRNA">
    <property type="protein sequence ID" value="YOR085W"/>
    <property type="gene ID" value="YOR085W"/>
</dbReference>
<dbReference type="GeneID" id="854252"/>
<dbReference type="KEGG" id="sce:YOR085W"/>
<dbReference type="AGR" id="SGD:S000005611"/>
<dbReference type="SGD" id="S000005611">
    <property type="gene designation" value="OST3"/>
</dbReference>
<dbReference type="VEuPathDB" id="FungiDB:YOR085W"/>
<dbReference type="eggNOG" id="KOG2603">
    <property type="taxonomic scope" value="Eukaryota"/>
</dbReference>
<dbReference type="GeneTree" id="ENSGT00390000012030"/>
<dbReference type="HOGENOM" id="CLU_052855_1_0_1"/>
<dbReference type="InParanoid" id="P48439"/>
<dbReference type="OMA" id="VLFGMYS"/>
<dbReference type="OrthoDB" id="67566at2759"/>
<dbReference type="BioCyc" id="MetaCyc:YOR085W-MONOMER"/>
<dbReference type="BioCyc" id="YEAST:YOR085W-MONOMER"/>
<dbReference type="BRENDA" id="2.4.99.18">
    <property type="organism ID" value="984"/>
</dbReference>
<dbReference type="Reactome" id="R-SCE-5223345">
    <property type="pathway name" value="Miscellaneous transport and binding events"/>
</dbReference>
<dbReference type="Reactome" id="R-SCE-6798695">
    <property type="pathway name" value="Neutrophil degranulation"/>
</dbReference>
<dbReference type="UniPathway" id="UPA00378"/>
<dbReference type="BioGRID-ORCS" id="854252">
    <property type="hits" value="6 hits in 10 CRISPR screens"/>
</dbReference>
<dbReference type="PRO" id="PR:P48439"/>
<dbReference type="Proteomes" id="UP000002311">
    <property type="component" value="Chromosome XV"/>
</dbReference>
<dbReference type="RNAct" id="P48439">
    <property type="molecule type" value="protein"/>
</dbReference>
<dbReference type="GO" id="GO:0005783">
    <property type="term" value="C:endoplasmic reticulum"/>
    <property type="evidence" value="ECO:0007005"/>
    <property type="project" value="SGD"/>
</dbReference>
<dbReference type="GO" id="GO:0005789">
    <property type="term" value="C:endoplasmic reticulum membrane"/>
    <property type="evidence" value="ECO:0000303"/>
    <property type="project" value="ComplexPortal"/>
</dbReference>
<dbReference type="GO" id="GO:0016020">
    <property type="term" value="C:membrane"/>
    <property type="evidence" value="ECO:0000315"/>
    <property type="project" value="SGD"/>
</dbReference>
<dbReference type="GO" id="GO:0008250">
    <property type="term" value="C:oligosaccharyltransferase complex"/>
    <property type="evidence" value="ECO:0000314"/>
    <property type="project" value="SGD"/>
</dbReference>
<dbReference type="GO" id="GO:0004579">
    <property type="term" value="F:dolichyl-diphosphooligosaccharide-protein glycotransferase activity"/>
    <property type="evidence" value="ECO:0000315"/>
    <property type="project" value="SGD"/>
</dbReference>
<dbReference type="GO" id="GO:0015035">
    <property type="term" value="F:protein-disulfide reductase activity"/>
    <property type="evidence" value="ECO:0000314"/>
    <property type="project" value="SGD"/>
</dbReference>
<dbReference type="GO" id="GO:0006486">
    <property type="term" value="P:protein glycosylation"/>
    <property type="evidence" value="ECO:0000315"/>
    <property type="project" value="SGD"/>
</dbReference>
<dbReference type="GO" id="GO:0006487">
    <property type="term" value="P:protein N-linked glycosylation"/>
    <property type="evidence" value="ECO:0000315"/>
    <property type="project" value="SGD"/>
</dbReference>
<dbReference type="GO" id="GO:0018279">
    <property type="term" value="P:protein N-linked glycosylation via asparagine"/>
    <property type="evidence" value="ECO:0000318"/>
    <property type="project" value="GO_Central"/>
</dbReference>
<dbReference type="GO" id="GO:0035269">
    <property type="term" value="P:protein O-linked mannosylation"/>
    <property type="evidence" value="ECO:0000316"/>
    <property type="project" value="SGD"/>
</dbReference>
<dbReference type="DisProt" id="DP01196"/>
<dbReference type="Gene3D" id="3.40.30.10">
    <property type="entry name" value="Glutaredoxin"/>
    <property type="match status" value="1"/>
</dbReference>
<dbReference type="InterPro" id="IPR021149">
    <property type="entry name" value="OligosaccharylTrfase_OST3/OST6"/>
</dbReference>
<dbReference type="PANTHER" id="PTHR12692">
    <property type="entry name" value="DOLICHYL-DIPHOSPHOOLIGOSACCHARIDE--PROTEIN GLYCOSYLTRANSFERASE-RELATED"/>
    <property type="match status" value="1"/>
</dbReference>
<dbReference type="PANTHER" id="PTHR12692:SF0">
    <property type="entry name" value="GH11935P"/>
    <property type="match status" value="1"/>
</dbReference>
<dbReference type="Pfam" id="PF04756">
    <property type="entry name" value="OST3_OST6"/>
    <property type="match status" value="1"/>
</dbReference>
<protein>
    <recommendedName>
        <fullName>Dolichyl-diphosphooligosaccharide--protein glycosyltransferase subunit 3</fullName>
    </recommendedName>
    <alternativeName>
        <fullName>Oligosaccharyl transferase 34 kDa subunit</fullName>
    </alternativeName>
    <alternativeName>
        <fullName>Oligosaccharyl transferase subunit OST3</fullName>
    </alternativeName>
    <alternativeName>
        <fullName>Oligosaccharyl transferase subunit gamma</fullName>
    </alternativeName>
</protein>
<comment type="function">
    <text evidence="4">Subunit of the oligosaccharyl transferase (OST) complex that catalyzes the initial transfer of a defined glycan (Glc(3)Man(9)GlcNAc(2) in eukaryotes) from the lipid carrier dolichol-pyrophosphate to an asparagine residue within an Asn-X-Ser/Thr consensus motif in nascent polypeptide chains, the first step in protein N-glycosylation. N-glycosylation occurs cotranslationally and the complex associates with the Sec61 complex at the channel-forming translocon complex that mediates protein translocation across the endoplasmic reticulum (ER). All subunits are required for a maximal enzyme activity.</text>
</comment>
<comment type="pathway">
    <text evidence="13">Protein modification; protein glycosylation.</text>
</comment>
<comment type="subunit">
    <text evidence="3 6 7 8 9 11">Component of the oligosaccharyltransferase (OST) complex, which appears to exist in two assemblies comprising OST1, OST2, OST4, OST5, STT3, SWP1, WPB1, and either OST3 or OST6 (PubMed:10677492, PubMed:15886282, PubMed:16096345, PubMed:16297388, PubMed:29301962, PubMed:9405463). OST assembly occurs through the formation of 3 subcomplexes. Subcomplex 1 contains OST1 and OST5, subcomplex 2 contains STT3, OST3, and OST4, and subcomplex 3 contains OST2, WBP1, and SWP1 (PubMed:29301962).</text>
</comment>
<comment type="interaction">
    <interactant intactId="EBI-12680">
        <id>P48439</id>
    </interactant>
    <interactant intactId="EBI-12689">
        <id>Q99380</id>
        <label>OST4</label>
    </interactant>
    <organismsDiffer>false</organismsDiffer>
    <experiments>3</experiments>
</comment>
<comment type="interaction">
    <interactant intactId="EBI-12680">
        <id>P48439</id>
    </interactant>
    <interactant intactId="EBI-18447">
        <id>P39007</id>
        <label>STT3</label>
    </interactant>
    <organismsDiffer>false</organismsDiffer>
    <experiments>2</experiments>
</comment>
<comment type="subcellular location">
    <subcellularLocation>
        <location evidence="12">Endoplasmic reticulum membrane</location>
        <topology evidence="9">Multi-pass membrane protein</topology>
    </subcellularLocation>
</comment>
<comment type="miscellaneous">
    <text evidence="5">Present with 4030 molecules/cell in log phase SD medium.</text>
</comment>
<comment type="similarity">
    <text evidence="12">Belongs to the OST3/OST6 family.</text>
</comment>
<gene>
    <name type="primary">OST3</name>
    <name type="ordered locus">YOR085W</name>
    <name type="ORF">YOR3124W</name>
</gene>
<evidence type="ECO:0000255" key="1"/>
<evidence type="ECO:0000255" key="2">
    <source>
        <dbReference type="PROSITE-ProRule" id="PRU00691"/>
    </source>
</evidence>
<evidence type="ECO:0000269" key="3">
    <source>
    </source>
</evidence>
<evidence type="ECO:0000269" key="4">
    <source>
    </source>
</evidence>
<evidence type="ECO:0000269" key="5">
    <source>
    </source>
</evidence>
<evidence type="ECO:0000269" key="6">
    <source>
    </source>
</evidence>
<evidence type="ECO:0000269" key="7">
    <source>
    </source>
</evidence>
<evidence type="ECO:0000269" key="8">
    <source>
    </source>
</evidence>
<evidence type="ECO:0000269" key="9">
    <source>
    </source>
</evidence>
<evidence type="ECO:0000269" key="10">
    <source>
    </source>
</evidence>
<evidence type="ECO:0000269" key="11">
    <source>
    </source>
</evidence>
<evidence type="ECO:0000305" key="12"/>
<evidence type="ECO:0000305" key="13">
    <source>
    </source>
</evidence>
<evidence type="ECO:0007829" key="14">
    <source>
        <dbReference type="PDB" id="6C26"/>
    </source>
</evidence>
<evidence type="ECO:0007829" key="15">
    <source>
        <dbReference type="PDB" id="8AGC"/>
    </source>
</evidence>
<evidence type="ECO:0007829" key="16">
    <source>
        <dbReference type="PDB" id="8AGE"/>
    </source>
</evidence>
<proteinExistence type="evidence at protein level"/>
<reference key="1">
    <citation type="journal article" date="1995" name="J. Cell Biol.">
        <title>Functional characterization of Ost3p. Loss of the 34-kD subunit of the Saccharomyces cerevisiae oligosaccharyltransferase results in biased underglycosylation of acceptor substrates.</title>
        <authorList>
            <person name="Karaoglu D."/>
            <person name="Kelleher D.J."/>
            <person name="Gilmore R."/>
        </authorList>
    </citation>
    <scope>NUCLEOTIDE SEQUENCE [GENOMIC DNA]</scope>
    <scope>PROTEIN SEQUENCE OF 23-37; 99-103; 123-153 AND 345-350</scope>
</reference>
<reference key="2">
    <citation type="journal article" date="1999" name="J. Biol. Chem.">
        <title>The oligosaccharyltransferase complex from Saccharomyces cerevisiae. Isolation of the OST6 gene, its synthetic interaction with OST3, and analysis of the native complex.</title>
        <authorList>
            <person name="Knauer R."/>
            <person name="Lehle L."/>
        </authorList>
    </citation>
    <scope>NUCLEOTIDE SEQUENCE [GENOMIC DNA]</scope>
    <source>
        <strain>ATCC 204508 / S288c</strain>
    </source>
</reference>
<reference key="3">
    <citation type="journal article" date="1997" name="Yeast">
        <title>DNA sequencing and analysis of 130 kb from yeast chromosome XV.</title>
        <authorList>
            <person name="Voss H."/>
            <person name="Benes V."/>
            <person name="Andrade M.A."/>
            <person name="Valencia A."/>
            <person name="Rechmann S."/>
            <person name="Teodoru C."/>
            <person name="Schwager C."/>
            <person name="Paces V."/>
            <person name="Sander C."/>
            <person name="Ansorge W."/>
        </authorList>
    </citation>
    <scope>NUCLEOTIDE SEQUENCE [GENOMIC DNA]</scope>
</reference>
<reference key="4">
    <citation type="journal article" date="1997" name="Nature">
        <title>The nucleotide sequence of Saccharomyces cerevisiae chromosome XV.</title>
        <authorList>
            <person name="Dujon B."/>
            <person name="Albermann K."/>
            <person name="Aldea M."/>
            <person name="Alexandraki D."/>
            <person name="Ansorge W."/>
            <person name="Arino J."/>
            <person name="Benes V."/>
            <person name="Bohn C."/>
            <person name="Bolotin-Fukuhara M."/>
            <person name="Bordonne R."/>
            <person name="Boyer J."/>
            <person name="Camasses A."/>
            <person name="Casamayor A."/>
            <person name="Casas C."/>
            <person name="Cheret G."/>
            <person name="Cziepluch C."/>
            <person name="Daignan-Fornier B."/>
            <person name="Dang V.-D."/>
            <person name="de Haan M."/>
            <person name="Delius H."/>
            <person name="Durand P."/>
            <person name="Fairhead C."/>
            <person name="Feldmann H."/>
            <person name="Gaillon L."/>
            <person name="Galisson F."/>
            <person name="Gamo F.-J."/>
            <person name="Gancedo C."/>
            <person name="Goffeau A."/>
            <person name="Goulding S.E."/>
            <person name="Grivell L.A."/>
            <person name="Habbig B."/>
            <person name="Hand N.J."/>
            <person name="Hani J."/>
            <person name="Hattenhorst U."/>
            <person name="Hebling U."/>
            <person name="Hernando Y."/>
            <person name="Herrero E."/>
            <person name="Heumann K."/>
            <person name="Hiesel R."/>
            <person name="Hilger F."/>
            <person name="Hofmann B."/>
            <person name="Hollenberg C.P."/>
            <person name="Hughes B."/>
            <person name="Jauniaux J.-C."/>
            <person name="Kalogeropoulos A."/>
            <person name="Katsoulou C."/>
            <person name="Kordes E."/>
            <person name="Lafuente M.J."/>
            <person name="Landt O."/>
            <person name="Louis E.J."/>
            <person name="Maarse A.C."/>
            <person name="Madania A."/>
            <person name="Mannhaupt G."/>
            <person name="Marck C."/>
            <person name="Martin R.P."/>
            <person name="Mewes H.-W."/>
            <person name="Michaux G."/>
            <person name="Paces V."/>
            <person name="Parle-McDermott A.G."/>
            <person name="Pearson B.M."/>
            <person name="Perrin A."/>
            <person name="Pettersson B."/>
            <person name="Poch O."/>
            <person name="Pohl T.M."/>
            <person name="Poirey R."/>
            <person name="Portetelle D."/>
            <person name="Pujol A."/>
            <person name="Purnelle B."/>
            <person name="Ramezani Rad M."/>
            <person name="Rechmann S."/>
            <person name="Schwager C."/>
            <person name="Schweizer M."/>
            <person name="Sor F."/>
            <person name="Sterky F."/>
            <person name="Tarassov I.A."/>
            <person name="Teodoru C."/>
            <person name="Tettelin H."/>
            <person name="Thierry A."/>
            <person name="Tobiasch E."/>
            <person name="Tzermia M."/>
            <person name="Uhlen M."/>
            <person name="Unseld M."/>
            <person name="Valens M."/>
            <person name="Vandenbol M."/>
            <person name="Vetter I."/>
            <person name="Vlcek C."/>
            <person name="Voet M."/>
            <person name="Volckaert G."/>
            <person name="Voss H."/>
            <person name="Wambutt R."/>
            <person name="Wedler H."/>
            <person name="Wiemann S."/>
            <person name="Winsor B."/>
            <person name="Wolfe K.H."/>
            <person name="Zollner A."/>
            <person name="Zumstein E."/>
            <person name="Kleine K."/>
        </authorList>
    </citation>
    <scope>NUCLEOTIDE SEQUENCE [LARGE SCALE GENOMIC DNA]</scope>
    <source>
        <strain>ATCC 204508 / S288c</strain>
    </source>
</reference>
<reference key="5">
    <citation type="journal article" date="2014" name="G3 (Bethesda)">
        <title>The reference genome sequence of Saccharomyces cerevisiae: Then and now.</title>
        <authorList>
            <person name="Engel S.R."/>
            <person name="Dietrich F.S."/>
            <person name="Fisk D.G."/>
            <person name="Binkley G."/>
            <person name="Balakrishnan R."/>
            <person name="Costanzo M.C."/>
            <person name="Dwight S.S."/>
            <person name="Hitz B.C."/>
            <person name="Karra K."/>
            <person name="Nash R.S."/>
            <person name="Weng S."/>
            <person name="Wong E.D."/>
            <person name="Lloyd P."/>
            <person name="Skrzypek M.S."/>
            <person name="Miyasato S.R."/>
            <person name="Simison M."/>
            <person name="Cherry J.M."/>
        </authorList>
    </citation>
    <scope>GENOME REANNOTATION</scope>
    <source>
        <strain>ATCC 204508 / S288c</strain>
    </source>
</reference>
<reference key="6">
    <citation type="journal article" date="2007" name="Genome Res.">
        <title>Approaching a complete repository of sequence-verified protein-encoding clones for Saccharomyces cerevisiae.</title>
        <authorList>
            <person name="Hu Y."/>
            <person name="Rolfs A."/>
            <person name="Bhullar B."/>
            <person name="Murthy T.V.S."/>
            <person name="Zhu C."/>
            <person name="Berger M.F."/>
            <person name="Camargo A.A."/>
            <person name="Kelley F."/>
            <person name="McCarron S."/>
            <person name="Jepson D."/>
            <person name="Richardson A."/>
            <person name="Raphael J."/>
            <person name="Moreira D."/>
            <person name="Taycher E."/>
            <person name="Zuo D."/>
            <person name="Mohr S."/>
            <person name="Kane M.F."/>
            <person name="Williamson J."/>
            <person name="Simpson A.J.G."/>
            <person name="Bulyk M.L."/>
            <person name="Harlow E."/>
            <person name="Marsischky G."/>
            <person name="Kolodner R.D."/>
            <person name="LaBaer J."/>
        </authorList>
    </citation>
    <scope>NUCLEOTIDE SEQUENCE [GENOMIC DNA]</scope>
    <source>
        <strain>ATCC 204508 / S288c</strain>
    </source>
</reference>
<reference key="7">
    <citation type="journal article" date="1994" name="J. Biol. Chem.">
        <title>The Saccharomyces cerevisiae oligosaccharyltransferase is a protein complex composed of Wbp1p, Swp1p, and four additional polypeptides.</title>
        <authorList>
            <person name="Kelleher D.J."/>
            <person name="Gilmore R."/>
        </authorList>
    </citation>
    <scope>IDENTIFICATION IN THE OLIGOSACCHARYL TRANSFERASE COMPLEX</scope>
</reference>
<reference key="8">
    <citation type="journal article" date="1997" name="J. Biol. Chem.">
        <title>The highly conserved Stt3 protein is a subunit of the yeast oligosaccharyltransferase and forms a subcomplex with Ost3p and Ost4p.</title>
        <authorList>
            <person name="Karaoglu D."/>
            <person name="Kelleher D.J."/>
            <person name="Gilmore R."/>
        </authorList>
    </citation>
    <scope>IDENTIFICATION IN THE OLIGOSACCHARYL TRANSFERASE COMPLEX</scope>
    <scope>INTERACTION WITH OST4 AND STT3</scope>
</reference>
<reference key="9">
    <citation type="journal article" date="1999" name="Biochim. Biophys. Acta">
        <title>The oligosaccharyltransferase complex from yeast.</title>
        <authorList>
            <person name="Knauer R."/>
            <person name="Lehle L."/>
        </authorList>
    </citation>
    <scope>REVIEW ON OLIGOSACCHARYL TRANSFERASE</scope>
</reference>
<reference key="10">
    <citation type="journal article" date="2000" name="Proc. Natl. Acad. Sci. U.S.A.">
        <title>Studies on the role of the hydrophobic domain of Ost4p in interactions with other subunits of yeast oligosaccharyl transferase.</title>
        <authorList>
            <person name="Kim H."/>
            <person name="Park H."/>
            <person name="Montalvo L."/>
            <person name="Lennarz W.J."/>
        </authorList>
    </citation>
    <scope>INTERACTION WITH OST4 AND STT3</scope>
</reference>
<reference key="11">
    <citation type="journal article" date="2001" name="Biochemistry">
        <title>Allosteric regulation provides a molecular mechanism for preferential utilization of the fully assembled dolichol-linked oligosaccharide by the yeast oligosaccharyltransferase.</title>
        <authorList>
            <person name="Karaoglu D."/>
            <person name="Kelleher D.J."/>
            <person name="Gilmore R."/>
        </authorList>
    </citation>
    <scope>FUNCTION</scope>
</reference>
<reference key="12">
    <citation type="journal article" date="2003" name="Nature">
        <title>Global analysis of protein expression in yeast.</title>
        <authorList>
            <person name="Ghaemmaghami S."/>
            <person name="Huh W.-K."/>
            <person name="Bower K."/>
            <person name="Howson R.W."/>
            <person name="Belle A."/>
            <person name="Dephoure N."/>
            <person name="O'Shea E.K."/>
            <person name="Weissman J.S."/>
        </authorList>
    </citation>
    <scope>LEVEL OF PROTEIN EXPRESSION [LARGE SCALE ANALYSIS]</scope>
</reference>
<reference key="13">
    <citation type="journal article" date="2005" name="FEBS Lett.">
        <title>Yeast oligosaccharyltransferase consists of two functionally distinct sub-complexes, specified by either the Ost3p or Ost6p subunit.</title>
        <authorList>
            <person name="Schwarz M."/>
            <person name="Knauer R."/>
            <person name="Lehle L."/>
        </authorList>
    </citation>
    <scope>COMPOSITION OF OLIGOSACCHARYL TRANSFERASE COMPLEXES</scope>
</reference>
<reference key="14">
    <citation type="journal article" date="2005" name="Glycobiology">
        <title>The 3.4-kDa Ost4 protein is required for the assembly of two distinct oligosaccharyltransferase complexes in yeast.</title>
        <authorList>
            <person name="Spirig U."/>
            <person name="Bodmer D."/>
            <person name="Wacker M."/>
            <person name="Burda P."/>
            <person name="Aebi M."/>
        </authorList>
    </citation>
    <scope>COMPOSITION OF OLIGOSACCHARYL TRANSFERASE COMPLEXES</scope>
</reference>
<reference key="15">
    <citation type="journal article" date="2005" name="Glycobiology">
        <title>Two oligosaccharyl transferase complexes exist in yeast and associate with two different translocons.</title>
        <authorList>
            <person name="Yan A."/>
            <person name="Lennarz W.J."/>
        </authorList>
    </citation>
    <scope>COMPOSITION OF OLIGOSACCHARYL TRANSFERASE COMPLEXES</scope>
</reference>
<reference key="16">
    <citation type="journal article" date="2005" name="Proc. Natl. Acad. Sci. U.S.A.">
        <title>Studies of yeast oligosaccharyl transferase subunits using the split-ubiquitin system: topological features and in vivo interactions.</title>
        <authorList>
            <person name="Yan A."/>
            <person name="Wu E."/>
            <person name="Lennarz W.J."/>
        </authorList>
    </citation>
    <scope>TOPOLOGY</scope>
    <scope>INTERACTION WITH OST1; OST2; OST4 AND STT3</scope>
</reference>
<reference key="17">
    <citation type="journal article" date="2018" name="Nature">
        <title>The atomic structure of a eukaryotic oligosaccharyltransferase complex.</title>
        <authorList>
            <person name="Bai L."/>
            <person name="Wang T."/>
            <person name="Zhao G."/>
            <person name="Kovach A."/>
            <person name="Li H."/>
        </authorList>
    </citation>
    <scope>STRUCTURE BY ELECTRON MICROSCOPY (3.50 ANGSTROMS) OF 1-350</scope>
</reference>
<reference key="18">
    <citation type="journal article" date="2018" name="Science">
        <title>Structure of the yeast oligosaccharyltransferase complex gives insight into eukaryotic N-glycosylation.</title>
        <authorList>
            <person name="Wild R."/>
            <person name="Kowal J."/>
            <person name="Eyring J."/>
            <person name="Ngwa E.M."/>
            <person name="Aebi M."/>
            <person name="Locher K.P."/>
        </authorList>
    </citation>
    <scope>STRUCTURE BY ELECTRON MICROSCOPY (3.30 ANGSTROMS) OF 1-350</scope>
</reference>